<feature type="chain" id="PRO_1000146816" description="Quinolinate synthase">
    <location>
        <begin position="1"/>
        <end position="352"/>
    </location>
</feature>
<feature type="binding site" evidence="1">
    <location>
        <position position="55"/>
    </location>
    <ligand>
        <name>iminosuccinate</name>
        <dbReference type="ChEBI" id="CHEBI:77875"/>
    </ligand>
</feature>
<feature type="binding site" evidence="1">
    <location>
        <position position="72"/>
    </location>
    <ligand>
        <name>iminosuccinate</name>
        <dbReference type="ChEBI" id="CHEBI:77875"/>
    </ligand>
</feature>
<feature type="binding site" evidence="1">
    <location>
        <position position="117"/>
    </location>
    <ligand>
        <name>[4Fe-4S] cluster</name>
        <dbReference type="ChEBI" id="CHEBI:49883"/>
    </ligand>
</feature>
<feature type="binding site" evidence="1">
    <location>
        <begin position="143"/>
        <end position="145"/>
    </location>
    <ligand>
        <name>iminosuccinate</name>
        <dbReference type="ChEBI" id="CHEBI:77875"/>
    </ligand>
</feature>
<feature type="binding site" evidence="1">
    <location>
        <position position="160"/>
    </location>
    <ligand>
        <name>iminosuccinate</name>
        <dbReference type="ChEBI" id="CHEBI:77875"/>
    </ligand>
</feature>
<feature type="binding site" evidence="1">
    <location>
        <position position="204"/>
    </location>
    <ligand>
        <name>[4Fe-4S] cluster</name>
        <dbReference type="ChEBI" id="CHEBI:49883"/>
    </ligand>
</feature>
<feature type="binding site" evidence="1">
    <location>
        <begin position="230"/>
        <end position="232"/>
    </location>
    <ligand>
        <name>iminosuccinate</name>
        <dbReference type="ChEBI" id="CHEBI:77875"/>
    </ligand>
</feature>
<feature type="binding site" evidence="1">
    <location>
        <position position="258"/>
    </location>
    <ligand>
        <name>iminosuccinate</name>
        <dbReference type="ChEBI" id="CHEBI:77875"/>
    </ligand>
</feature>
<feature type="binding site" evidence="1">
    <location>
        <position position="303"/>
    </location>
    <ligand>
        <name>[4Fe-4S] cluster</name>
        <dbReference type="ChEBI" id="CHEBI:49883"/>
    </ligand>
</feature>
<proteinExistence type="inferred from homology"/>
<reference key="1">
    <citation type="journal article" date="2009" name="Nat. Genet.">
        <title>Comparative genomic and phylogeographic analysis of Mycobacterium leprae.</title>
        <authorList>
            <person name="Monot M."/>
            <person name="Honore N."/>
            <person name="Garnier T."/>
            <person name="Zidane N."/>
            <person name="Sherafi D."/>
            <person name="Paniz-Mondolfi A."/>
            <person name="Matsuoka M."/>
            <person name="Taylor G.M."/>
            <person name="Donoghue H.D."/>
            <person name="Bouwman A."/>
            <person name="Mays S."/>
            <person name="Watson C."/>
            <person name="Lockwood D."/>
            <person name="Khamispour A."/>
            <person name="Dowlati Y."/>
            <person name="Jianping S."/>
            <person name="Rea T.H."/>
            <person name="Vera-Cabrera L."/>
            <person name="Stefani M.M."/>
            <person name="Banu S."/>
            <person name="Macdonald M."/>
            <person name="Sapkota B.R."/>
            <person name="Spencer J.S."/>
            <person name="Thomas J."/>
            <person name="Harshman K."/>
            <person name="Singh P."/>
            <person name="Busso P."/>
            <person name="Gattiker A."/>
            <person name="Rougemont J."/>
            <person name="Brennan P.J."/>
            <person name="Cole S.T."/>
        </authorList>
    </citation>
    <scope>NUCLEOTIDE SEQUENCE [LARGE SCALE GENOMIC DNA]</scope>
    <source>
        <strain>Br4923</strain>
    </source>
</reference>
<gene>
    <name evidence="1" type="primary">nadA</name>
    <name type="ordered locus">MLBr01225</name>
</gene>
<name>NADA_MYCLB</name>
<protein>
    <recommendedName>
        <fullName evidence="1">Quinolinate synthase</fullName>
        <ecNumber evidence="1">2.5.1.72</ecNumber>
    </recommendedName>
</protein>
<keyword id="KW-0004">4Fe-4S</keyword>
<keyword id="KW-0963">Cytoplasm</keyword>
<keyword id="KW-0408">Iron</keyword>
<keyword id="KW-0411">Iron-sulfur</keyword>
<keyword id="KW-0479">Metal-binding</keyword>
<keyword id="KW-0662">Pyridine nucleotide biosynthesis</keyword>
<keyword id="KW-0808">Transferase</keyword>
<evidence type="ECO:0000255" key="1">
    <source>
        <dbReference type="HAMAP-Rule" id="MF_00568"/>
    </source>
</evidence>
<sequence length="352" mass="37918">MTVLNGMEPLAGDMTVVIAGITDSPVGYAGVDGDEQWATEIRRLTRLRGATVLAHNYQLPAIQDIADYVGDSLALSRIAAEVPEETIVFCGVHFMAETAKILSPNKTVLIPDQRAGCSLADSITPDELCAWKDEHPGAAVVSYVNTTAEVKALTDICCTSSNAVDVVESIDPSREVLFCPDQFLGAHVRRVTGRKNVYVWMGECHVHAGINGDELVDQARANPDAELFVHPECGCSTSALYLAGEGAFPPDRVKILSTGGMLTAARQTQYRKILVATEVGMLYQLRRAAPEIDFRAVNDRASCKYMKMITPGALLRCLVEGTDEVHVDSEIAAAGRRSVQRMIEIGLPGGGE</sequence>
<comment type="function">
    <text evidence="1">Catalyzes the condensation of iminoaspartate with dihydroxyacetone phosphate to form quinolinate.</text>
</comment>
<comment type="catalytic activity">
    <reaction evidence="1">
        <text>iminosuccinate + dihydroxyacetone phosphate = quinolinate + phosphate + 2 H2O + H(+)</text>
        <dbReference type="Rhea" id="RHEA:25888"/>
        <dbReference type="ChEBI" id="CHEBI:15377"/>
        <dbReference type="ChEBI" id="CHEBI:15378"/>
        <dbReference type="ChEBI" id="CHEBI:29959"/>
        <dbReference type="ChEBI" id="CHEBI:43474"/>
        <dbReference type="ChEBI" id="CHEBI:57642"/>
        <dbReference type="ChEBI" id="CHEBI:77875"/>
        <dbReference type="EC" id="2.5.1.72"/>
    </reaction>
    <physiologicalReaction direction="left-to-right" evidence="1">
        <dbReference type="Rhea" id="RHEA:25889"/>
    </physiologicalReaction>
</comment>
<comment type="cofactor">
    <cofactor evidence="1">
        <name>[4Fe-4S] cluster</name>
        <dbReference type="ChEBI" id="CHEBI:49883"/>
    </cofactor>
    <text evidence="1">Binds 1 [4Fe-4S] cluster per subunit.</text>
</comment>
<comment type="pathway">
    <text evidence="1">Cofactor biosynthesis; NAD(+) biosynthesis; quinolinate from iminoaspartate: step 1/1.</text>
</comment>
<comment type="subcellular location">
    <subcellularLocation>
        <location evidence="1">Cytoplasm</location>
    </subcellularLocation>
</comment>
<comment type="similarity">
    <text evidence="1">Belongs to the quinolinate synthase family. Type 2 subfamily.</text>
</comment>
<organism>
    <name type="scientific">Mycobacterium leprae (strain Br4923)</name>
    <dbReference type="NCBI Taxonomy" id="561304"/>
    <lineage>
        <taxon>Bacteria</taxon>
        <taxon>Bacillati</taxon>
        <taxon>Actinomycetota</taxon>
        <taxon>Actinomycetes</taxon>
        <taxon>Mycobacteriales</taxon>
        <taxon>Mycobacteriaceae</taxon>
        <taxon>Mycobacterium</taxon>
    </lineage>
</organism>
<dbReference type="EC" id="2.5.1.72" evidence="1"/>
<dbReference type="EMBL" id="FM211192">
    <property type="protein sequence ID" value="CAR71320.1"/>
    <property type="molecule type" value="Genomic_DNA"/>
</dbReference>
<dbReference type="SMR" id="B8ZR90"/>
<dbReference type="KEGG" id="mlb:MLBr01225"/>
<dbReference type="HOGENOM" id="CLU_047382_0_0_11"/>
<dbReference type="UniPathway" id="UPA00253">
    <property type="reaction ID" value="UER00327"/>
</dbReference>
<dbReference type="Proteomes" id="UP000006900">
    <property type="component" value="Chromosome"/>
</dbReference>
<dbReference type="GO" id="GO:0005829">
    <property type="term" value="C:cytosol"/>
    <property type="evidence" value="ECO:0007669"/>
    <property type="project" value="TreeGrafter"/>
</dbReference>
<dbReference type="GO" id="GO:0051539">
    <property type="term" value="F:4 iron, 4 sulfur cluster binding"/>
    <property type="evidence" value="ECO:0007669"/>
    <property type="project" value="UniProtKB-KW"/>
</dbReference>
<dbReference type="GO" id="GO:0046872">
    <property type="term" value="F:metal ion binding"/>
    <property type="evidence" value="ECO:0007669"/>
    <property type="project" value="UniProtKB-KW"/>
</dbReference>
<dbReference type="GO" id="GO:0008987">
    <property type="term" value="F:quinolinate synthetase A activity"/>
    <property type="evidence" value="ECO:0007669"/>
    <property type="project" value="UniProtKB-UniRule"/>
</dbReference>
<dbReference type="GO" id="GO:0034628">
    <property type="term" value="P:'de novo' NAD biosynthetic process from L-aspartate"/>
    <property type="evidence" value="ECO:0007669"/>
    <property type="project" value="TreeGrafter"/>
</dbReference>
<dbReference type="FunFam" id="3.40.50.10800:FF:000007">
    <property type="entry name" value="Quinolinate synthase A"/>
    <property type="match status" value="1"/>
</dbReference>
<dbReference type="Gene3D" id="3.40.50.10800">
    <property type="entry name" value="NadA-like"/>
    <property type="match status" value="3"/>
</dbReference>
<dbReference type="HAMAP" id="MF_00568">
    <property type="entry name" value="NadA_type2"/>
    <property type="match status" value="1"/>
</dbReference>
<dbReference type="InterPro" id="IPR003473">
    <property type="entry name" value="NadA"/>
</dbReference>
<dbReference type="InterPro" id="IPR036094">
    <property type="entry name" value="NadA_sf"/>
</dbReference>
<dbReference type="InterPro" id="IPR023066">
    <property type="entry name" value="Quinolinate_synth_type2"/>
</dbReference>
<dbReference type="NCBIfam" id="TIGR00550">
    <property type="entry name" value="nadA"/>
    <property type="match status" value="1"/>
</dbReference>
<dbReference type="NCBIfam" id="NF006878">
    <property type="entry name" value="PRK09375.1-2"/>
    <property type="match status" value="1"/>
</dbReference>
<dbReference type="NCBIfam" id="NF006879">
    <property type="entry name" value="PRK09375.1-4"/>
    <property type="match status" value="1"/>
</dbReference>
<dbReference type="PANTHER" id="PTHR30573:SF0">
    <property type="entry name" value="QUINOLINATE SYNTHASE, CHLOROPLASTIC"/>
    <property type="match status" value="1"/>
</dbReference>
<dbReference type="PANTHER" id="PTHR30573">
    <property type="entry name" value="QUINOLINATE SYNTHETASE A"/>
    <property type="match status" value="1"/>
</dbReference>
<dbReference type="Pfam" id="PF02445">
    <property type="entry name" value="NadA"/>
    <property type="match status" value="1"/>
</dbReference>
<dbReference type="SUPFAM" id="SSF142754">
    <property type="entry name" value="NadA-like"/>
    <property type="match status" value="1"/>
</dbReference>
<accession>B8ZR90</accession>